<name>MCPH1_COLGU</name>
<reference key="1">
    <citation type="journal article" date="2004" name="Hum. Mol. Genet.">
        <title>Reconstructing the evolutionary history of microcephalin, a gene controlling human brain size.</title>
        <authorList>
            <person name="Evans P.D."/>
            <person name="Anderson J.R."/>
            <person name="Vallender E.J."/>
            <person name="Choi S.S."/>
            <person name="Lahn B.T."/>
        </authorList>
    </citation>
    <scope>NUCLEOTIDE SEQUENCE [GENOMIC DNA]</scope>
</reference>
<comment type="function">
    <text evidence="1">Implicated in chromosome condensation and DNA damage induced cellular responses. May play a role in neurogenesis and regulation of the size of the cerebral cortex (By similarity).</text>
</comment>
<comment type="subunit">
    <text evidence="1">Interacts with CDC27 and maybe other components of the APC/C complex. Interacts with histone variant H2AX under DNA damage conditions (By similarity).</text>
</comment>
<comment type="subcellular location">
    <subcellularLocation>
        <location evidence="1">Cytoplasm</location>
        <location evidence="1">Cytoskeleton</location>
        <location evidence="1">Microtubule organizing center</location>
        <location evidence="1">Centrosome</location>
    </subcellularLocation>
</comment>
<comment type="domain">
    <text evidence="1">BRCT domain 1 is required to prevent abnormal chromosome condensation. It binds directly to the SWI-SNF chromatin remodeling complex (By similarity).</text>
</comment>
<comment type="domain">
    <text evidence="1">BRCT domains 2 and 3 recognize phosphoserine/phosphothreonine marks on proteins with high selectivity, and mediate interaction with phosphorylated CDC27. They also mediate the dual recognition of phosphoserine and phosphotyrosine in the C-terminal tail of histone H2AX (By similarity).</text>
</comment>
<gene>
    <name evidence="3" type="primary">MCPH1</name>
</gene>
<protein>
    <recommendedName>
        <fullName evidence="3">Microcephalin</fullName>
    </recommendedName>
</protein>
<keyword id="KW-0963">Cytoplasm</keyword>
<keyword id="KW-0206">Cytoskeleton</keyword>
<keyword id="KW-0597">Phosphoprotein</keyword>
<keyword id="KW-0677">Repeat</keyword>
<accession>P61590</accession>
<sequence>MAAPILKDVVAYVEVWSSNGTENYSKTFTTQLVDMGAKVSKTFNKQVTHVIFKDGYQSTWDKAQKRGVKLVSVLWVEKCRTAGAHIDESLFPAANTNEHLPSLIKKKRKCMQPKDFNFKTPENDKRFQKKFEKMANELQRQKTSLDGDVPILLFESNGSLTYSPIIKINSSHHSAMEKRLQEMKEKRENLSPTSSQMIQQSHDNPSNSLCEAPLNISHDTLCSDESIAGLHSSFDDLCGYSGCGNQERKLGGSINDTKSAMCVSSLVLKTNHIHSSPSFAHLDKSSPQKFLSNLSKEEINLPRNIVGKIVTPDQKQAAGTSQETFEEKYRLSPTFSSTKGHLLIHSRPRSSSVKRKRVSYGFHSPPKEKCKRKRSIRRSIMPRLQLCSSEGSRQHMAGPALEALSCAESSYDDYFSPDNLKERNSENLPPESQLPSSPAQFSCRSLSKKERTSMFEMSDFSCIGKKTRTVDMTSFTAKTISSPQKTANGEGRATLSGVTSEESSAPEETLRCCRQAGPQQKEGACPEGNGFSYTIEDPALPKGHDGDLTPLEGILEEVKEAVGLKSTQDKGTTSKISNSSEGEASSEHEPRSVVDCNVERSAEEKENLLGGYSGSVKNRPTRHDVLDGSCDSFKDLIKPHEELKKSGKGKKPTRTLVMTSMPSEKQNIVIQVVDKLKGFSIAPDVCETTTHVLSGKPLRTLNVLLGIARGCWVLSYDWVLWSLESGHWISEESFELSNHFPAAPLCRRECHLSAGPYRGTLFADQPVMFVSPASSPPVAKLCELVHLCGGRVSQVPRQASIVIGPYSGKKKATVKYLSEKWVLDSITQHKVCASENYLLPQ</sequence>
<evidence type="ECO:0000250" key="1"/>
<evidence type="ECO:0000250" key="2">
    <source>
        <dbReference type="UniProtKB" id="Q7TT79"/>
    </source>
</evidence>
<evidence type="ECO:0000250" key="3">
    <source>
        <dbReference type="UniProtKB" id="Q8NEM0"/>
    </source>
</evidence>
<evidence type="ECO:0000255" key="4">
    <source>
        <dbReference type="PROSITE-ProRule" id="PRU00033"/>
    </source>
</evidence>
<evidence type="ECO:0000256" key="5">
    <source>
        <dbReference type="SAM" id="MobiDB-lite"/>
    </source>
</evidence>
<organism>
    <name type="scientific">Colobus guereza</name>
    <name type="common">Mantled guereza</name>
    <name type="synonym">Eastern black-and-white colobus monkey</name>
    <dbReference type="NCBI Taxonomy" id="33548"/>
    <lineage>
        <taxon>Eukaryota</taxon>
        <taxon>Metazoa</taxon>
        <taxon>Chordata</taxon>
        <taxon>Craniata</taxon>
        <taxon>Vertebrata</taxon>
        <taxon>Euteleostomi</taxon>
        <taxon>Mammalia</taxon>
        <taxon>Eutheria</taxon>
        <taxon>Euarchontoglires</taxon>
        <taxon>Primates</taxon>
        <taxon>Haplorrhini</taxon>
        <taxon>Catarrhini</taxon>
        <taxon>Cercopithecidae</taxon>
        <taxon>Colobinae</taxon>
        <taxon>Colobus</taxon>
    </lineage>
</organism>
<feature type="chain" id="PRO_0000096294" description="Microcephalin">
    <location>
        <begin position="1"/>
        <end position="841"/>
    </location>
</feature>
<feature type="domain" description="BRCT 1" evidence="4">
    <location>
        <begin position="1"/>
        <end position="93"/>
    </location>
</feature>
<feature type="domain" description="BRCT 2" evidence="4">
    <location>
        <begin position="646"/>
        <end position="736"/>
    </location>
</feature>
<feature type="domain" description="BRCT 3" evidence="4">
    <location>
        <begin position="757"/>
        <end position="839"/>
    </location>
</feature>
<feature type="region of interest" description="Disordered" evidence="5">
    <location>
        <begin position="340"/>
        <end position="375"/>
    </location>
</feature>
<feature type="region of interest" description="Disordered" evidence="5">
    <location>
        <begin position="417"/>
        <end position="445"/>
    </location>
</feature>
<feature type="region of interest" description="Disordered" evidence="5">
    <location>
        <begin position="481"/>
        <end position="507"/>
    </location>
</feature>
<feature type="region of interest" description="Disordered" evidence="5">
    <location>
        <begin position="562"/>
        <end position="593"/>
    </location>
</feature>
<feature type="compositionally biased region" description="Basic residues" evidence="5">
    <location>
        <begin position="342"/>
        <end position="358"/>
    </location>
</feature>
<feature type="compositionally biased region" description="Polar residues" evidence="5">
    <location>
        <begin position="433"/>
        <end position="445"/>
    </location>
</feature>
<feature type="compositionally biased region" description="Polar residues" evidence="5">
    <location>
        <begin position="565"/>
        <end position="583"/>
    </location>
</feature>
<feature type="modified residue" description="Phosphoserine" evidence="3">
    <location>
        <position position="278"/>
    </location>
</feature>
<feature type="modified residue" description="Phosphoserine" evidence="3">
    <location>
        <position position="286"/>
    </location>
</feature>
<feature type="modified residue" description="Phosphoserine" evidence="2">
    <location>
        <position position="295"/>
    </location>
</feature>
<feature type="modified residue" description="Phosphoserine" evidence="3">
    <location>
        <position position="332"/>
    </location>
</feature>
<feature type="modified residue" description="Phosphothreonine" evidence="3">
    <location>
        <position position="334"/>
    </location>
</feature>
<dbReference type="EMBL" id="AY553051">
    <property type="protein sequence ID" value="AAS91381.1"/>
    <property type="molecule type" value="Genomic_DNA"/>
</dbReference>
<dbReference type="EMBL" id="AY553038">
    <property type="protein sequence ID" value="AAS91381.1"/>
    <property type="status" value="JOINED"/>
    <property type="molecule type" value="Genomic_DNA"/>
</dbReference>
<dbReference type="EMBL" id="AY553039">
    <property type="protein sequence ID" value="AAS91381.1"/>
    <property type="status" value="JOINED"/>
    <property type="molecule type" value="Genomic_DNA"/>
</dbReference>
<dbReference type="EMBL" id="AY553040">
    <property type="protein sequence ID" value="AAS91381.1"/>
    <property type="status" value="JOINED"/>
    <property type="molecule type" value="Genomic_DNA"/>
</dbReference>
<dbReference type="EMBL" id="AY553041">
    <property type="protein sequence ID" value="AAS91381.1"/>
    <property type="status" value="JOINED"/>
    <property type="molecule type" value="Genomic_DNA"/>
</dbReference>
<dbReference type="EMBL" id="AY553042">
    <property type="protein sequence ID" value="AAS91381.1"/>
    <property type="status" value="JOINED"/>
    <property type="molecule type" value="Genomic_DNA"/>
</dbReference>
<dbReference type="EMBL" id="AY553043">
    <property type="protein sequence ID" value="AAS91381.1"/>
    <property type="status" value="JOINED"/>
    <property type="molecule type" value="Genomic_DNA"/>
</dbReference>
<dbReference type="EMBL" id="AY553044">
    <property type="protein sequence ID" value="AAS91381.1"/>
    <property type="status" value="JOINED"/>
    <property type="molecule type" value="Genomic_DNA"/>
</dbReference>
<dbReference type="EMBL" id="AY553045">
    <property type="protein sequence ID" value="AAS91381.1"/>
    <property type="status" value="JOINED"/>
    <property type="molecule type" value="Genomic_DNA"/>
</dbReference>
<dbReference type="EMBL" id="AY553046">
    <property type="protein sequence ID" value="AAS91381.1"/>
    <property type="status" value="JOINED"/>
    <property type="molecule type" value="Genomic_DNA"/>
</dbReference>
<dbReference type="EMBL" id="AY553047">
    <property type="protein sequence ID" value="AAS91381.1"/>
    <property type="status" value="JOINED"/>
    <property type="molecule type" value="Genomic_DNA"/>
</dbReference>
<dbReference type="EMBL" id="AY553048">
    <property type="protein sequence ID" value="AAS91381.1"/>
    <property type="status" value="JOINED"/>
    <property type="molecule type" value="Genomic_DNA"/>
</dbReference>
<dbReference type="EMBL" id="AY553049">
    <property type="protein sequence ID" value="AAS91381.1"/>
    <property type="status" value="JOINED"/>
    <property type="molecule type" value="Genomic_DNA"/>
</dbReference>
<dbReference type="EMBL" id="AY553050">
    <property type="protein sequence ID" value="AAS91381.1"/>
    <property type="status" value="JOINED"/>
    <property type="molecule type" value="Genomic_DNA"/>
</dbReference>
<dbReference type="SMR" id="P61590"/>
<dbReference type="GO" id="GO:0005813">
    <property type="term" value="C:centrosome"/>
    <property type="evidence" value="ECO:0007669"/>
    <property type="project" value="UniProtKB-SubCell"/>
</dbReference>
<dbReference type="GO" id="GO:0005737">
    <property type="term" value="C:cytoplasm"/>
    <property type="evidence" value="ECO:0007669"/>
    <property type="project" value="UniProtKB-KW"/>
</dbReference>
<dbReference type="GO" id="GO:0021987">
    <property type="term" value="P:cerebral cortex development"/>
    <property type="evidence" value="ECO:0007669"/>
    <property type="project" value="InterPro"/>
</dbReference>
<dbReference type="GO" id="GO:0000278">
    <property type="term" value="P:mitotic cell cycle"/>
    <property type="evidence" value="ECO:0007669"/>
    <property type="project" value="TreeGrafter"/>
</dbReference>
<dbReference type="CDD" id="cd17716">
    <property type="entry name" value="BRCT_microcephalin_rpt1"/>
    <property type="match status" value="1"/>
</dbReference>
<dbReference type="CDD" id="cd17736">
    <property type="entry name" value="BRCT_microcephalin_rpt2"/>
    <property type="match status" value="1"/>
</dbReference>
<dbReference type="CDD" id="cd17751">
    <property type="entry name" value="BRCT_microcephalin_rpt3"/>
    <property type="match status" value="1"/>
</dbReference>
<dbReference type="FunFam" id="3.40.50.10190:FF:000047">
    <property type="entry name" value="Microcephalin"/>
    <property type="match status" value="1"/>
</dbReference>
<dbReference type="FunFam" id="3.40.50.10190:FF:000053">
    <property type="entry name" value="Microcephalin"/>
    <property type="match status" value="1"/>
</dbReference>
<dbReference type="FunFam" id="3.40.50.10190:FF:000055">
    <property type="entry name" value="Microcephalin"/>
    <property type="match status" value="1"/>
</dbReference>
<dbReference type="Gene3D" id="3.40.50.10190">
    <property type="entry name" value="BRCT domain"/>
    <property type="match status" value="3"/>
</dbReference>
<dbReference type="InterPro" id="IPR001357">
    <property type="entry name" value="BRCT_dom"/>
</dbReference>
<dbReference type="InterPro" id="IPR036420">
    <property type="entry name" value="BRCT_dom_sf"/>
</dbReference>
<dbReference type="InterPro" id="IPR022047">
    <property type="entry name" value="Microcephalin-like"/>
</dbReference>
<dbReference type="InterPro" id="IPR029504">
    <property type="entry name" value="Microcephalin_mammal"/>
</dbReference>
<dbReference type="PANTHER" id="PTHR14625">
    <property type="entry name" value="MICROCEPHALIN"/>
    <property type="match status" value="1"/>
</dbReference>
<dbReference type="PANTHER" id="PTHR14625:SF3">
    <property type="entry name" value="MICROCEPHALIN"/>
    <property type="match status" value="1"/>
</dbReference>
<dbReference type="Pfam" id="PF12258">
    <property type="entry name" value="Microcephalin"/>
    <property type="match status" value="1"/>
</dbReference>
<dbReference type="Pfam" id="PF12738">
    <property type="entry name" value="PTCB-BRCT"/>
    <property type="match status" value="1"/>
</dbReference>
<dbReference type="SMART" id="SM00292">
    <property type="entry name" value="BRCT"/>
    <property type="match status" value="3"/>
</dbReference>
<dbReference type="SUPFAM" id="SSF52113">
    <property type="entry name" value="BRCT domain"/>
    <property type="match status" value="3"/>
</dbReference>
<dbReference type="PROSITE" id="PS50172">
    <property type="entry name" value="BRCT"/>
    <property type="match status" value="3"/>
</dbReference>
<proteinExistence type="inferred from homology"/>